<keyword id="KW-0004">4Fe-4S</keyword>
<keyword id="KW-0963">Cytoplasm</keyword>
<keyword id="KW-0408">Iron</keyword>
<keyword id="KW-0411">Iron-sulfur</keyword>
<keyword id="KW-0479">Metal-binding</keyword>
<keyword id="KW-1185">Reference proteome</keyword>
<keyword id="KW-0949">S-adenosyl-L-methionine</keyword>
<keyword id="KW-0808">Transferase</keyword>
<keyword id="KW-0819">tRNA processing</keyword>
<comment type="function">
    <text evidence="1">Catalyzes the methylthiolation of N6-(dimethylallyl)adenosine (i(6)A), leading to the formation of 2-methylthio-N6-(dimethylallyl)adenosine (ms(2)i(6)A) at position 37 in tRNAs that read codons beginning with uridine.</text>
</comment>
<comment type="catalytic activity">
    <reaction evidence="1">
        <text>N(6)-dimethylallyladenosine(37) in tRNA + (sulfur carrier)-SH + AH2 + 2 S-adenosyl-L-methionine = 2-methylsulfanyl-N(6)-dimethylallyladenosine(37) in tRNA + (sulfur carrier)-H + 5'-deoxyadenosine + L-methionine + A + S-adenosyl-L-homocysteine + 2 H(+)</text>
        <dbReference type="Rhea" id="RHEA:37067"/>
        <dbReference type="Rhea" id="RHEA-COMP:10375"/>
        <dbReference type="Rhea" id="RHEA-COMP:10376"/>
        <dbReference type="Rhea" id="RHEA-COMP:14737"/>
        <dbReference type="Rhea" id="RHEA-COMP:14739"/>
        <dbReference type="ChEBI" id="CHEBI:13193"/>
        <dbReference type="ChEBI" id="CHEBI:15378"/>
        <dbReference type="ChEBI" id="CHEBI:17319"/>
        <dbReference type="ChEBI" id="CHEBI:17499"/>
        <dbReference type="ChEBI" id="CHEBI:29917"/>
        <dbReference type="ChEBI" id="CHEBI:57844"/>
        <dbReference type="ChEBI" id="CHEBI:57856"/>
        <dbReference type="ChEBI" id="CHEBI:59789"/>
        <dbReference type="ChEBI" id="CHEBI:64428"/>
        <dbReference type="ChEBI" id="CHEBI:74415"/>
        <dbReference type="ChEBI" id="CHEBI:74417"/>
        <dbReference type="EC" id="2.8.4.3"/>
    </reaction>
</comment>
<comment type="cofactor">
    <cofactor evidence="1">
        <name>[4Fe-4S] cluster</name>
        <dbReference type="ChEBI" id="CHEBI:49883"/>
    </cofactor>
    <text evidence="1">Binds 2 [4Fe-4S] clusters. One cluster is coordinated with 3 cysteines and an exchangeable S-adenosyl-L-methionine.</text>
</comment>
<comment type="subunit">
    <text evidence="1">Monomer.</text>
</comment>
<comment type="subcellular location">
    <subcellularLocation>
        <location evidence="1">Cytoplasm</location>
    </subcellularLocation>
</comment>
<comment type="similarity">
    <text evidence="1">Belongs to the methylthiotransferase family. MiaB subfamily.</text>
</comment>
<organism>
    <name type="scientific">Prochlorococcus marinus (strain NATL2A)</name>
    <dbReference type="NCBI Taxonomy" id="59920"/>
    <lineage>
        <taxon>Bacteria</taxon>
        <taxon>Bacillati</taxon>
        <taxon>Cyanobacteriota</taxon>
        <taxon>Cyanophyceae</taxon>
        <taxon>Synechococcales</taxon>
        <taxon>Prochlorococcaceae</taxon>
        <taxon>Prochlorococcus</taxon>
    </lineage>
</organism>
<feature type="chain" id="PRO_0000374453" description="tRNA-2-methylthio-N(6)-dimethylallyladenosine synthase">
    <location>
        <begin position="1"/>
        <end position="463"/>
    </location>
</feature>
<feature type="domain" description="MTTase N-terminal" evidence="1">
    <location>
        <begin position="19"/>
        <end position="135"/>
    </location>
</feature>
<feature type="domain" description="Radical SAM core" evidence="2">
    <location>
        <begin position="156"/>
        <end position="393"/>
    </location>
</feature>
<feature type="domain" description="TRAM" evidence="1">
    <location>
        <begin position="396"/>
        <end position="463"/>
    </location>
</feature>
<feature type="binding site" evidence="1">
    <location>
        <position position="28"/>
    </location>
    <ligand>
        <name>[4Fe-4S] cluster</name>
        <dbReference type="ChEBI" id="CHEBI:49883"/>
        <label>1</label>
    </ligand>
</feature>
<feature type="binding site" evidence="1">
    <location>
        <position position="64"/>
    </location>
    <ligand>
        <name>[4Fe-4S] cluster</name>
        <dbReference type="ChEBI" id="CHEBI:49883"/>
        <label>1</label>
    </ligand>
</feature>
<feature type="binding site" evidence="1">
    <location>
        <position position="98"/>
    </location>
    <ligand>
        <name>[4Fe-4S] cluster</name>
        <dbReference type="ChEBI" id="CHEBI:49883"/>
        <label>1</label>
    </ligand>
</feature>
<feature type="binding site" evidence="1">
    <location>
        <position position="170"/>
    </location>
    <ligand>
        <name>[4Fe-4S] cluster</name>
        <dbReference type="ChEBI" id="CHEBI:49883"/>
        <label>2</label>
        <note>4Fe-4S-S-AdoMet</note>
    </ligand>
</feature>
<feature type="binding site" evidence="1">
    <location>
        <position position="174"/>
    </location>
    <ligand>
        <name>[4Fe-4S] cluster</name>
        <dbReference type="ChEBI" id="CHEBI:49883"/>
        <label>2</label>
        <note>4Fe-4S-S-AdoMet</note>
    </ligand>
</feature>
<feature type="binding site" evidence="1">
    <location>
        <position position="177"/>
    </location>
    <ligand>
        <name>[4Fe-4S] cluster</name>
        <dbReference type="ChEBI" id="CHEBI:49883"/>
        <label>2</label>
        <note>4Fe-4S-S-AdoMet</note>
    </ligand>
</feature>
<proteinExistence type="inferred from homology"/>
<dbReference type="EC" id="2.8.4.3" evidence="1"/>
<dbReference type="EMBL" id="CP000095">
    <property type="protein sequence ID" value="AAZ58362.1"/>
    <property type="molecule type" value="Genomic_DNA"/>
</dbReference>
<dbReference type="RefSeq" id="WP_011294959.1">
    <property type="nucleotide sequence ID" value="NC_007335.2"/>
</dbReference>
<dbReference type="SMR" id="Q46JG6"/>
<dbReference type="STRING" id="59920.PMN2A_0871"/>
<dbReference type="KEGG" id="pmn:PMN2A_0871"/>
<dbReference type="HOGENOM" id="CLU_018697_2_2_3"/>
<dbReference type="OrthoDB" id="9805215at2"/>
<dbReference type="PhylomeDB" id="Q46JG6"/>
<dbReference type="Proteomes" id="UP000002535">
    <property type="component" value="Chromosome"/>
</dbReference>
<dbReference type="GO" id="GO:0005737">
    <property type="term" value="C:cytoplasm"/>
    <property type="evidence" value="ECO:0007669"/>
    <property type="project" value="UniProtKB-SubCell"/>
</dbReference>
<dbReference type="GO" id="GO:0051539">
    <property type="term" value="F:4 iron, 4 sulfur cluster binding"/>
    <property type="evidence" value="ECO:0007669"/>
    <property type="project" value="UniProtKB-UniRule"/>
</dbReference>
<dbReference type="GO" id="GO:0046872">
    <property type="term" value="F:metal ion binding"/>
    <property type="evidence" value="ECO:0007669"/>
    <property type="project" value="UniProtKB-KW"/>
</dbReference>
<dbReference type="GO" id="GO:0035596">
    <property type="term" value="F:methylthiotransferase activity"/>
    <property type="evidence" value="ECO:0007669"/>
    <property type="project" value="InterPro"/>
</dbReference>
<dbReference type="GO" id="GO:0035600">
    <property type="term" value="P:tRNA methylthiolation"/>
    <property type="evidence" value="ECO:0007669"/>
    <property type="project" value="TreeGrafter"/>
</dbReference>
<dbReference type="CDD" id="cd01335">
    <property type="entry name" value="Radical_SAM"/>
    <property type="match status" value="1"/>
</dbReference>
<dbReference type="FunFam" id="3.40.50.12160:FF:000003">
    <property type="entry name" value="CDK5 regulatory subunit-associated protein 1"/>
    <property type="match status" value="1"/>
</dbReference>
<dbReference type="FunFam" id="3.80.30.20:FF:000001">
    <property type="entry name" value="tRNA-2-methylthio-N(6)-dimethylallyladenosine synthase 2"/>
    <property type="match status" value="1"/>
</dbReference>
<dbReference type="Gene3D" id="3.40.50.12160">
    <property type="entry name" value="Methylthiotransferase, N-terminal domain"/>
    <property type="match status" value="1"/>
</dbReference>
<dbReference type="Gene3D" id="3.80.30.20">
    <property type="entry name" value="tm_1862 like domain"/>
    <property type="match status" value="1"/>
</dbReference>
<dbReference type="HAMAP" id="MF_01864">
    <property type="entry name" value="tRNA_metthiotr_MiaB"/>
    <property type="match status" value="1"/>
</dbReference>
<dbReference type="InterPro" id="IPR006638">
    <property type="entry name" value="Elp3/MiaA/NifB-like_rSAM"/>
</dbReference>
<dbReference type="InterPro" id="IPR005839">
    <property type="entry name" value="Methylthiotransferase"/>
</dbReference>
<dbReference type="InterPro" id="IPR020612">
    <property type="entry name" value="Methylthiotransferase_CS"/>
</dbReference>
<dbReference type="InterPro" id="IPR013848">
    <property type="entry name" value="Methylthiotransferase_N"/>
</dbReference>
<dbReference type="InterPro" id="IPR038135">
    <property type="entry name" value="Methylthiotransferase_N_sf"/>
</dbReference>
<dbReference type="InterPro" id="IPR006463">
    <property type="entry name" value="MiaB_methiolase"/>
</dbReference>
<dbReference type="InterPro" id="IPR007197">
    <property type="entry name" value="rSAM"/>
</dbReference>
<dbReference type="InterPro" id="IPR023404">
    <property type="entry name" value="rSAM_horseshoe"/>
</dbReference>
<dbReference type="InterPro" id="IPR002792">
    <property type="entry name" value="TRAM_dom"/>
</dbReference>
<dbReference type="NCBIfam" id="TIGR01574">
    <property type="entry name" value="miaB-methiolase"/>
    <property type="match status" value="1"/>
</dbReference>
<dbReference type="NCBIfam" id="TIGR00089">
    <property type="entry name" value="MiaB/RimO family radical SAM methylthiotransferase"/>
    <property type="match status" value="1"/>
</dbReference>
<dbReference type="PANTHER" id="PTHR43020">
    <property type="entry name" value="CDK5 REGULATORY SUBUNIT-ASSOCIATED PROTEIN 1"/>
    <property type="match status" value="1"/>
</dbReference>
<dbReference type="PANTHER" id="PTHR43020:SF2">
    <property type="entry name" value="MITOCHONDRIAL TRNA METHYLTHIOTRANSFERASE CDK5RAP1"/>
    <property type="match status" value="1"/>
</dbReference>
<dbReference type="Pfam" id="PF04055">
    <property type="entry name" value="Radical_SAM"/>
    <property type="match status" value="1"/>
</dbReference>
<dbReference type="Pfam" id="PF01938">
    <property type="entry name" value="TRAM"/>
    <property type="match status" value="1"/>
</dbReference>
<dbReference type="Pfam" id="PF00919">
    <property type="entry name" value="UPF0004"/>
    <property type="match status" value="1"/>
</dbReference>
<dbReference type="SFLD" id="SFLDF00273">
    <property type="entry name" value="(dimethylallyl)adenosine_tRNA"/>
    <property type="match status" value="1"/>
</dbReference>
<dbReference type="SFLD" id="SFLDG01082">
    <property type="entry name" value="B12-binding_domain_containing"/>
    <property type="match status" value="1"/>
</dbReference>
<dbReference type="SFLD" id="SFLDG01061">
    <property type="entry name" value="methylthiotransferase"/>
    <property type="match status" value="1"/>
</dbReference>
<dbReference type="SMART" id="SM00729">
    <property type="entry name" value="Elp3"/>
    <property type="match status" value="1"/>
</dbReference>
<dbReference type="SUPFAM" id="SSF102114">
    <property type="entry name" value="Radical SAM enzymes"/>
    <property type="match status" value="1"/>
</dbReference>
<dbReference type="PROSITE" id="PS51449">
    <property type="entry name" value="MTTASE_N"/>
    <property type="match status" value="1"/>
</dbReference>
<dbReference type="PROSITE" id="PS01278">
    <property type="entry name" value="MTTASE_RADICAL"/>
    <property type="match status" value="1"/>
</dbReference>
<dbReference type="PROSITE" id="PS51918">
    <property type="entry name" value="RADICAL_SAM"/>
    <property type="match status" value="1"/>
</dbReference>
<dbReference type="PROSITE" id="PS50926">
    <property type="entry name" value="TRAM"/>
    <property type="match status" value="1"/>
</dbReference>
<reference key="1">
    <citation type="journal article" date="2007" name="PLoS Genet.">
        <title>Patterns and implications of gene gain and loss in the evolution of Prochlorococcus.</title>
        <authorList>
            <person name="Kettler G.C."/>
            <person name="Martiny A.C."/>
            <person name="Huang K."/>
            <person name="Zucker J."/>
            <person name="Coleman M.L."/>
            <person name="Rodrigue S."/>
            <person name="Chen F."/>
            <person name="Lapidus A."/>
            <person name="Ferriera S."/>
            <person name="Johnson J."/>
            <person name="Steglich C."/>
            <person name="Church G.M."/>
            <person name="Richardson P."/>
            <person name="Chisholm S.W."/>
        </authorList>
    </citation>
    <scope>NUCLEOTIDE SEQUENCE [LARGE SCALE GENOMIC DNA]</scope>
    <source>
        <strain>NATL2A</strain>
    </source>
</reference>
<evidence type="ECO:0000255" key="1">
    <source>
        <dbReference type="HAMAP-Rule" id="MF_01864"/>
    </source>
</evidence>
<evidence type="ECO:0000255" key="2">
    <source>
        <dbReference type="PROSITE-ProRule" id="PRU01266"/>
    </source>
</evidence>
<sequence length="463" mass="52778">MTTVQLQKTNQPSIKASRGSYWITTFGCQMNKADSERMSGILEYMGYYPAEEELKADLVLYNTCTIRDSAEQKVYSYLGRQAIRKRSLPNLKIVVAGCLAQQEGESLLRRVPEIDLLMGPQHCNRLESLLNQVDSGQQVLATEEQFILEDITTPRRDSSICGWVNIIYGCNERCTYCVVPSVRGKEQSRTPEAIKSEVEDLAKSGYKEITLLGQNIDAYGRDFQSQNKEDSAQVTLSYLLKYIHDIEGIERIRFATSHPRYFTKELIDTCSELPKVCEHFHIPFQSGSNKILKNMGRGYTIESYKNIINYIKAKIPKAAISGDAIVAFPGESETDYEQTLSLIDEIKFDHVNTAAYSPRPNTPAATWPRQLNEDIKVKRLREINSLVENIAKERNQRYKNTSQEILIENINPKDSFQLMGRTRTNRLTFFPRSLKNGVENKLGELIKVKITDVRPFSLTAKLL</sequence>
<gene>
    <name evidence="1" type="primary">miaB</name>
    <name type="ordered locus">PMN2A_0871</name>
</gene>
<accession>Q46JG6</accession>
<protein>
    <recommendedName>
        <fullName evidence="1">tRNA-2-methylthio-N(6)-dimethylallyladenosine synthase</fullName>
        <ecNumber evidence="1">2.8.4.3</ecNumber>
    </recommendedName>
    <alternativeName>
        <fullName evidence="1">(Dimethylallyl)adenosine tRNA methylthiotransferase MiaB</fullName>
    </alternativeName>
    <alternativeName>
        <fullName evidence="1">tRNA-i(6)A37 methylthiotransferase</fullName>
    </alternativeName>
</protein>
<name>MIAB_PROMT</name>